<feature type="transit peptide" description="Chloroplast" evidence="1">
    <location>
        <begin position="1"/>
        <end position="50"/>
    </location>
</feature>
<feature type="chain" id="PRO_0000441884" description="Protein WHAT'S THIS FACTOR 1, chloroplastic">
    <location>
        <begin position="51"/>
        <end position="498"/>
    </location>
</feature>
<feature type="domain" description="PORR" evidence="1">
    <location>
        <begin position="59"/>
        <end position="387"/>
    </location>
</feature>
<feature type="region of interest" description="Disordered" evidence="2">
    <location>
        <begin position="397"/>
        <end position="427"/>
    </location>
</feature>
<feature type="region of interest" description="Disordered" evidence="2">
    <location>
        <begin position="446"/>
        <end position="498"/>
    </location>
</feature>
<feature type="compositionally biased region" description="Acidic residues" evidence="2">
    <location>
        <begin position="417"/>
        <end position="427"/>
    </location>
</feature>
<feature type="compositionally biased region" description="Acidic residues" evidence="2">
    <location>
        <begin position="456"/>
        <end position="466"/>
    </location>
</feature>
<keyword id="KW-0150">Chloroplast</keyword>
<keyword id="KW-0507">mRNA processing</keyword>
<keyword id="KW-0508">mRNA splicing</keyword>
<keyword id="KW-0934">Plastid</keyword>
<keyword id="KW-1185">Reference proteome</keyword>
<keyword id="KW-0694">RNA-binding</keyword>
<keyword id="KW-0809">Transit peptide</keyword>
<name>WTF1_MAIZE</name>
<sequence length="498" mass="56980">MDAKLLLPFPFAPAAATRSPKSLFLGAPLPPPPRPPPFPLRLRPRPAAVVAQAAVKRRKEAPFDTVIQRDKKLKLVLKLRNILVAQPDRVMSLRELGRFRRDLGLTRKRRLIALLRRFPGVFDVVEEGVYSLRFRLTPAAERLYLDELRLRNESEGLAVAKLRKLLMMSQEKRILIEKVAHLKHDLGLPPEFRDTVCLRYPQYFRVVRMDRGPALELTHWDPELAVSAAELAEEESRAREAEERNLIIDRPLKFNRVRLPKGLKLTRGEARRIARFKEMPYISPYADFSHLRSGSDEKEKHACGVVHEILSLTVEKRTLVDHLTHFREEFRFSQSLRGMIIRHPDMFYVSFKGDRDSVFLREAYKDSQLVEKNQLVLLKEKMRALVAVPRFPRRAAVGTGEEAEGMNGSLQSRDQVSDEEYDDEDEGLSDMEDLISELSGGKSDADYEWGDGWFGENDDSPPDFGDDEVKVAMKIADGSANGSAPVPVFPDGRPRERW</sequence>
<reference key="1">
    <citation type="journal article" date="2009" name="Proc. Natl. Acad. Sci. U.S.A.">
        <title>A plant-specific RNA-binding domain revealed through analysis of chloroplast group II intron splicing.</title>
        <authorList>
            <person name="Kroeger T.S."/>
            <person name="Watkins K.P."/>
            <person name="Friso G."/>
            <person name="van Wijk K.J."/>
            <person name="Barkan A."/>
        </authorList>
    </citation>
    <scope>NUCLEOTIDE SEQUENCE [GENOMIC DNA]</scope>
    <scope>IDENTIFICATION BY MASS SPECTROMETRY</scope>
    <scope>FUNCTION</scope>
    <scope>SUBCELLULAR LOCATION</scope>
    <scope>DISRUPTION PHENOTYPE</scope>
    <source>
        <strain>cv. B73</strain>
    </source>
</reference>
<reference key="2">
    <citation type="journal article" date="2009" name="Science">
        <title>The B73 maize genome: complexity, diversity, and dynamics.</title>
        <authorList>
            <person name="Schnable P.S."/>
            <person name="Ware D."/>
            <person name="Fulton R.S."/>
            <person name="Stein J.C."/>
            <person name="Wei F."/>
            <person name="Pasternak S."/>
            <person name="Liang C."/>
            <person name="Zhang J."/>
            <person name="Fulton L."/>
            <person name="Graves T.A."/>
            <person name="Minx P."/>
            <person name="Reily A.D."/>
            <person name="Courtney L."/>
            <person name="Kruchowski S.S."/>
            <person name="Tomlinson C."/>
            <person name="Strong C."/>
            <person name="Delehaunty K."/>
            <person name="Fronick C."/>
            <person name="Courtney B."/>
            <person name="Rock S.M."/>
            <person name="Belter E."/>
            <person name="Du F."/>
            <person name="Kim K."/>
            <person name="Abbott R.M."/>
            <person name="Cotton M."/>
            <person name="Levy A."/>
            <person name="Marchetto P."/>
            <person name="Ochoa K."/>
            <person name="Jackson S.M."/>
            <person name="Gillam B."/>
            <person name="Chen W."/>
            <person name="Yan L."/>
            <person name="Higginbotham J."/>
            <person name="Cardenas M."/>
            <person name="Waligorski J."/>
            <person name="Applebaum E."/>
            <person name="Phelps L."/>
            <person name="Falcone J."/>
            <person name="Kanchi K."/>
            <person name="Thane T."/>
            <person name="Scimone A."/>
            <person name="Thane N."/>
            <person name="Henke J."/>
            <person name="Wang T."/>
            <person name="Ruppert J."/>
            <person name="Shah N."/>
            <person name="Rotter K."/>
            <person name="Hodges J."/>
            <person name="Ingenthron E."/>
            <person name="Cordes M."/>
            <person name="Kohlberg S."/>
            <person name="Sgro J."/>
            <person name="Delgado B."/>
            <person name="Mead K."/>
            <person name="Chinwalla A."/>
            <person name="Leonard S."/>
            <person name="Crouse K."/>
            <person name="Collura K."/>
            <person name="Kudrna D."/>
            <person name="Currie J."/>
            <person name="He R."/>
            <person name="Angelova A."/>
            <person name="Rajasekar S."/>
            <person name="Mueller T."/>
            <person name="Lomeli R."/>
            <person name="Scara G."/>
            <person name="Ko A."/>
            <person name="Delaney K."/>
            <person name="Wissotski M."/>
            <person name="Lopez G."/>
            <person name="Campos D."/>
            <person name="Braidotti M."/>
            <person name="Ashley E."/>
            <person name="Golser W."/>
            <person name="Kim H."/>
            <person name="Lee S."/>
            <person name="Lin J."/>
            <person name="Dujmic Z."/>
            <person name="Kim W."/>
            <person name="Talag J."/>
            <person name="Zuccolo A."/>
            <person name="Fan C."/>
            <person name="Sebastian A."/>
            <person name="Kramer M."/>
            <person name="Spiegel L."/>
            <person name="Nascimento L."/>
            <person name="Zutavern T."/>
            <person name="Miller B."/>
            <person name="Ambroise C."/>
            <person name="Muller S."/>
            <person name="Spooner W."/>
            <person name="Narechania A."/>
            <person name="Ren L."/>
            <person name="Wei S."/>
            <person name="Kumari S."/>
            <person name="Faga B."/>
            <person name="Levy M.J."/>
            <person name="McMahan L."/>
            <person name="Van Buren P."/>
            <person name="Vaughn M.W."/>
            <person name="Ying K."/>
            <person name="Yeh C.-T."/>
            <person name="Emrich S.J."/>
            <person name="Jia Y."/>
            <person name="Kalyanaraman A."/>
            <person name="Hsia A.-P."/>
            <person name="Barbazuk W.B."/>
            <person name="Baucom R.S."/>
            <person name="Brutnell T.P."/>
            <person name="Carpita N.C."/>
            <person name="Chaparro C."/>
            <person name="Chia J.-M."/>
            <person name="Deragon J.-M."/>
            <person name="Estill J.C."/>
            <person name="Fu Y."/>
            <person name="Jeddeloh J.A."/>
            <person name="Han Y."/>
            <person name="Lee H."/>
            <person name="Li P."/>
            <person name="Lisch D.R."/>
            <person name="Liu S."/>
            <person name="Liu Z."/>
            <person name="Nagel D.H."/>
            <person name="McCann M.C."/>
            <person name="SanMiguel P."/>
            <person name="Myers A.M."/>
            <person name="Nettleton D."/>
            <person name="Nguyen J."/>
            <person name="Penning B.W."/>
            <person name="Ponnala L."/>
            <person name="Schneider K.L."/>
            <person name="Schwartz D.C."/>
            <person name="Sharma A."/>
            <person name="Soderlund C."/>
            <person name="Springer N.M."/>
            <person name="Sun Q."/>
            <person name="Wang H."/>
            <person name="Waterman M."/>
            <person name="Westerman R."/>
            <person name="Wolfgruber T.K."/>
            <person name="Yang L."/>
            <person name="Yu Y."/>
            <person name="Zhang L."/>
            <person name="Zhou S."/>
            <person name="Zhu Q."/>
            <person name="Bennetzen J.L."/>
            <person name="Dawe R.K."/>
            <person name="Jiang J."/>
            <person name="Jiang N."/>
            <person name="Presting G.G."/>
            <person name="Wessler S.R."/>
            <person name="Aluru S."/>
            <person name="Martienssen R.A."/>
            <person name="Clifton S.W."/>
            <person name="McCombie W.R."/>
            <person name="Wing R.A."/>
            <person name="Wilson R.K."/>
        </authorList>
    </citation>
    <scope>NUCLEOTIDE SEQUENCE [LARGE SCALE GENOMIC DNA]</scope>
    <source>
        <strain>cv. B73</strain>
    </source>
</reference>
<reference key="3">
    <citation type="journal article" date="2009" name="Plant Mol. Biol.">
        <title>Insights into corn genes derived from large-scale cDNA sequencing.</title>
        <authorList>
            <person name="Alexandrov N.N."/>
            <person name="Brover V.V."/>
            <person name="Freidin S."/>
            <person name="Troukhan M.E."/>
            <person name="Tatarinova T.V."/>
            <person name="Zhang H."/>
            <person name="Swaller T.J."/>
            <person name="Lu Y.-P."/>
            <person name="Bouck J."/>
            <person name="Flavell R.B."/>
            <person name="Feldmann K.A."/>
        </authorList>
    </citation>
    <scope>NUCLEOTIDE SEQUENCE [LARGE SCALE MRNA]</scope>
</reference>
<dbReference type="EMBL" id="FJ264201">
    <property type="protein sequence ID" value="ACI96105.1"/>
    <property type="molecule type" value="Genomic_DNA"/>
</dbReference>
<dbReference type="EMBL" id="CM000784">
    <property type="protein sequence ID" value="AQK92309.1"/>
    <property type="molecule type" value="Genomic_DNA"/>
</dbReference>
<dbReference type="EMBL" id="EU968423">
    <property type="protein sequence ID" value="ACG40541.1"/>
    <property type="molecule type" value="mRNA"/>
</dbReference>
<dbReference type="RefSeq" id="NP_001144434.1">
    <property type="nucleotide sequence ID" value="NM_001150962.2"/>
</dbReference>
<dbReference type="DIP" id="DIP-48739N"/>
<dbReference type="FunCoup" id="B6TTV8">
    <property type="interactions" value="2113"/>
</dbReference>
<dbReference type="IntAct" id="B6TTV8">
    <property type="interactions" value="6"/>
</dbReference>
<dbReference type="STRING" id="4577.B6TTV8"/>
<dbReference type="PaxDb" id="4577-GRMZM2G403797_P01"/>
<dbReference type="EnsemblPlants" id="Zm00001eb344150_T001">
    <property type="protein sequence ID" value="Zm00001eb344150_P001"/>
    <property type="gene ID" value="Zm00001eb344150"/>
</dbReference>
<dbReference type="GeneID" id="100277394"/>
<dbReference type="Gramene" id="Zm00001eb344150_T001">
    <property type="protein sequence ID" value="Zm00001eb344150_P001"/>
    <property type="gene ID" value="Zm00001eb344150"/>
</dbReference>
<dbReference type="KEGG" id="zma:100277394"/>
<dbReference type="eggNOG" id="ENOG502QRW0">
    <property type="taxonomic scope" value="Eukaryota"/>
</dbReference>
<dbReference type="InParanoid" id="B6TTV8"/>
<dbReference type="OMA" id="CAVIHEM"/>
<dbReference type="OrthoDB" id="2019558at2759"/>
<dbReference type="Proteomes" id="UP000007305">
    <property type="component" value="Chromosome 8"/>
</dbReference>
<dbReference type="ExpressionAtlas" id="B6TTV8">
    <property type="expression patterns" value="baseline and differential"/>
</dbReference>
<dbReference type="GO" id="GO:0009507">
    <property type="term" value="C:chloroplast"/>
    <property type="evidence" value="ECO:0000314"/>
    <property type="project" value="UniProtKB"/>
</dbReference>
<dbReference type="GO" id="GO:0003729">
    <property type="term" value="F:mRNA binding"/>
    <property type="evidence" value="ECO:0007669"/>
    <property type="project" value="EnsemblPlants"/>
</dbReference>
<dbReference type="GO" id="GO:0003723">
    <property type="term" value="F:RNA binding"/>
    <property type="evidence" value="ECO:0000314"/>
    <property type="project" value="UniProtKB"/>
</dbReference>
<dbReference type="GO" id="GO:0000373">
    <property type="term" value="P:Group II intron splicing"/>
    <property type="evidence" value="ECO:0007669"/>
    <property type="project" value="EnsemblPlants"/>
</dbReference>
<dbReference type="GO" id="GO:0006397">
    <property type="term" value="P:mRNA processing"/>
    <property type="evidence" value="ECO:0007669"/>
    <property type="project" value="UniProtKB-KW"/>
</dbReference>
<dbReference type="GO" id="GO:0015979">
    <property type="term" value="P:photosynthesis"/>
    <property type="evidence" value="ECO:0007669"/>
    <property type="project" value="EnsemblPlants"/>
</dbReference>
<dbReference type="GO" id="GO:0008380">
    <property type="term" value="P:RNA splicing"/>
    <property type="evidence" value="ECO:0000315"/>
    <property type="project" value="UniProtKB"/>
</dbReference>
<dbReference type="InterPro" id="IPR021099">
    <property type="entry name" value="PORR_domain"/>
</dbReference>
<dbReference type="InterPro" id="IPR045040">
    <property type="entry name" value="PORR_fam"/>
</dbReference>
<dbReference type="PANTHER" id="PTHR31476">
    <property type="entry name" value="PROTEIN WHAT'S THIS FACTOR 1 HOMOLOG, CHLOROPLASTIC"/>
    <property type="match status" value="1"/>
</dbReference>
<dbReference type="PANTHER" id="PTHR31476:SF4">
    <property type="entry name" value="PROTEIN WHAT'S THIS FACTOR 1 HOMOLOG, CHLOROPLASTIC"/>
    <property type="match status" value="1"/>
</dbReference>
<dbReference type="Pfam" id="PF11955">
    <property type="entry name" value="PORR"/>
    <property type="match status" value="1"/>
</dbReference>
<comment type="function">
    <text evidence="3">RNA-binding protein involved in the chloroplastic group II intron splicing. Binds specific group II introns and promotes their splicing. Functions in the context of a heterodimer with the ribonuclease III domain-containing protein RNC1.</text>
</comment>
<comment type="interaction">
    <interactant intactId="EBI-15761679">
        <id>B6TTV8</id>
    </interactant>
    <interactant intactId="EBI-15761664">
        <id>Q84N49</id>
        <label>CAF1</label>
    </interactant>
    <organismsDiffer>false</organismsDiffer>
    <experiments>3</experiments>
</comment>
<comment type="interaction">
    <interactant intactId="EBI-15761679">
        <id>B6TTV8</id>
    </interactant>
    <interactant intactId="EBI-15761721">
        <id>Q84N48</id>
        <label>CAF2</label>
    </interactant>
    <organismsDiffer>false</organismsDiffer>
    <experiments>3</experiments>
</comment>
<comment type="interaction">
    <interactant intactId="EBI-15761679">
        <id>B6TTV8</id>
    </interactant>
    <interactant intactId="EBI-15761735">
        <id>A6YSL1</id>
        <label>RNC1</label>
    </interactant>
    <organismsDiffer>false</organismsDiffer>
    <experiments>4</experiments>
</comment>
<comment type="subcellular location">
    <subcellularLocation>
        <location evidence="4">Plastid</location>
        <location evidence="4">Chloroplast</location>
    </subcellularLocation>
</comment>
<comment type="disruption phenotype">
    <text evidence="4">Seedling lethality.</text>
</comment>
<accession>B6TTV8</accession>
<organism>
    <name type="scientific">Zea mays</name>
    <name type="common">Maize</name>
    <dbReference type="NCBI Taxonomy" id="4577"/>
    <lineage>
        <taxon>Eukaryota</taxon>
        <taxon>Viridiplantae</taxon>
        <taxon>Streptophyta</taxon>
        <taxon>Embryophyta</taxon>
        <taxon>Tracheophyta</taxon>
        <taxon>Spermatophyta</taxon>
        <taxon>Magnoliopsida</taxon>
        <taxon>Liliopsida</taxon>
        <taxon>Poales</taxon>
        <taxon>Poaceae</taxon>
        <taxon>PACMAD clade</taxon>
        <taxon>Panicoideae</taxon>
        <taxon>Andropogonodae</taxon>
        <taxon>Andropogoneae</taxon>
        <taxon>Tripsacinae</taxon>
        <taxon>Zea</taxon>
    </lineage>
</organism>
<proteinExistence type="evidence at protein level"/>
<protein>
    <recommendedName>
        <fullName evidence="5">Protein WHAT'S THIS FACTOR 1, chloroplastic</fullName>
    </recommendedName>
</protein>
<gene>
    <name evidence="5" type="primary">WTF1</name>
    <name evidence="6" type="ORF">ZEAMMB73_Zm00001d009618</name>
</gene>
<evidence type="ECO:0000255" key="1"/>
<evidence type="ECO:0000256" key="2">
    <source>
        <dbReference type="SAM" id="MobiDB-lite"/>
    </source>
</evidence>
<evidence type="ECO:0000269" key="3">
    <source>
    </source>
</evidence>
<evidence type="ECO:0000269" key="4">
    <source>
    </source>
</evidence>
<evidence type="ECO:0000303" key="5">
    <source>
    </source>
</evidence>
<evidence type="ECO:0000312" key="6">
    <source>
        <dbReference type="EMBL" id="AQK92309.1"/>
    </source>
</evidence>